<accession>Q5YYD3</accession>
<gene>
    <name evidence="1" type="primary">argG</name>
    <name type="ordered locus">NFA_19620</name>
</gene>
<comment type="catalytic activity">
    <reaction evidence="1">
        <text>L-citrulline + L-aspartate + ATP = 2-(N(omega)-L-arginino)succinate + AMP + diphosphate + H(+)</text>
        <dbReference type="Rhea" id="RHEA:10932"/>
        <dbReference type="ChEBI" id="CHEBI:15378"/>
        <dbReference type="ChEBI" id="CHEBI:29991"/>
        <dbReference type="ChEBI" id="CHEBI:30616"/>
        <dbReference type="ChEBI" id="CHEBI:33019"/>
        <dbReference type="ChEBI" id="CHEBI:57472"/>
        <dbReference type="ChEBI" id="CHEBI:57743"/>
        <dbReference type="ChEBI" id="CHEBI:456215"/>
        <dbReference type="EC" id="6.3.4.5"/>
    </reaction>
</comment>
<comment type="pathway">
    <text evidence="1">Amino-acid biosynthesis; L-arginine biosynthesis; L-arginine from L-ornithine and carbamoyl phosphate: step 2/3.</text>
</comment>
<comment type="subunit">
    <text evidence="1">Homotetramer.</text>
</comment>
<comment type="subcellular location">
    <subcellularLocation>
        <location evidence="1">Cytoplasm</location>
    </subcellularLocation>
</comment>
<comment type="similarity">
    <text evidence="1">Belongs to the argininosuccinate synthase family. Type 1 subfamily.</text>
</comment>
<sequence length="400" mass="43966">MSERVVLAYSGGLDTSVAISWIGKETGAEVVAVAIDLGQGGEDMNVVRQRALDCGAVESIVIDARDEFAEQYCLPTIQANALYMGQYPLVSAISRPLIVKHLVEAAKFHGADTVAHGCTGKGNDQVRFEVGIGALAPDLNVIAPVRDYAWTREKAIAFAEENKLPINVTKKSPFSIDQNVWGRAVETGFLEDLWNAPTKDVYDYTADPTVNFEAPDELIITFDKGVPVAIDGRPVSVLEAIVELNHRAGRQGVGRLDMVEDRLVGIKSREIYEAPGAITLITAHQALEHVTIERELGRYKRQVEQRWGELAYDGLWFSPLKRALDAFVQDTQQHVSGDIRMVLHGGSAVVNGRRSEQSLYDFNLATYDEGDTFDQSLAKGFVQIHGLSSKVAARRDLNQK</sequence>
<reference key="1">
    <citation type="journal article" date="2004" name="Proc. Natl. Acad. Sci. U.S.A.">
        <title>The complete genomic sequence of Nocardia farcinica IFM 10152.</title>
        <authorList>
            <person name="Ishikawa J."/>
            <person name="Yamashita A."/>
            <person name="Mikami Y."/>
            <person name="Hoshino Y."/>
            <person name="Kurita H."/>
            <person name="Hotta K."/>
            <person name="Shiba T."/>
            <person name="Hattori M."/>
        </authorList>
    </citation>
    <scope>NUCLEOTIDE SEQUENCE [LARGE SCALE GENOMIC DNA]</scope>
    <source>
        <strain>IFM 10152</strain>
    </source>
</reference>
<dbReference type="EC" id="6.3.4.5" evidence="1"/>
<dbReference type="EMBL" id="AP006618">
    <property type="protein sequence ID" value="BAD56808.1"/>
    <property type="molecule type" value="Genomic_DNA"/>
</dbReference>
<dbReference type="RefSeq" id="WP_011208493.1">
    <property type="nucleotide sequence ID" value="NC_006361.1"/>
</dbReference>
<dbReference type="SMR" id="Q5YYD3"/>
<dbReference type="STRING" id="247156.NFA_19620"/>
<dbReference type="GeneID" id="61132741"/>
<dbReference type="KEGG" id="nfa:NFA_19620"/>
<dbReference type="eggNOG" id="COG0137">
    <property type="taxonomic scope" value="Bacteria"/>
</dbReference>
<dbReference type="HOGENOM" id="CLU_032784_4_2_11"/>
<dbReference type="OrthoDB" id="9801641at2"/>
<dbReference type="UniPathway" id="UPA00068">
    <property type="reaction ID" value="UER00113"/>
</dbReference>
<dbReference type="Proteomes" id="UP000006820">
    <property type="component" value="Chromosome"/>
</dbReference>
<dbReference type="GO" id="GO:0005737">
    <property type="term" value="C:cytoplasm"/>
    <property type="evidence" value="ECO:0007669"/>
    <property type="project" value="UniProtKB-SubCell"/>
</dbReference>
<dbReference type="GO" id="GO:0004055">
    <property type="term" value="F:argininosuccinate synthase activity"/>
    <property type="evidence" value="ECO:0007669"/>
    <property type="project" value="UniProtKB-UniRule"/>
</dbReference>
<dbReference type="GO" id="GO:0005524">
    <property type="term" value="F:ATP binding"/>
    <property type="evidence" value="ECO:0007669"/>
    <property type="project" value="UniProtKB-UniRule"/>
</dbReference>
<dbReference type="GO" id="GO:0000053">
    <property type="term" value="P:argininosuccinate metabolic process"/>
    <property type="evidence" value="ECO:0007669"/>
    <property type="project" value="TreeGrafter"/>
</dbReference>
<dbReference type="GO" id="GO:0006526">
    <property type="term" value="P:L-arginine biosynthetic process"/>
    <property type="evidence" value="ECO:0007669"/>
    <property type="project" value="UniProtKB-UniRule"/>
</dbReference>
<dbReference type="GO" id="GO:0000050">
    <property type="term" value="P:urea cycle"/>
    <property type="evidence" value="ECO:0007669"/>
    <property type="project" value="TreeGrafter"/>
</dbReference>
<dbReference type="CDD" id="cd01999">
    <property type="entry name" value="ASS"/>
    <property type="match status" value="1"/>
</dbReference>
<dbReference type="FunFam" id="3.40.50.620:FF:000038">
    <property type="entry name" value="Argininosuccinate synthase"/>
    <property type="match status" value="1"/>
</dbReference>
<dbReference type="FunFam" id="3.90.1260.10:FF:000007">
    <property type="entry name" value="Argininosuccinate synthase"/>
    <property type="match status" value="1"/>
</dbReference>
<dbReference type="Gene3D" id="3.90.1260.10">
    <property type="entry name" value="Argininosuccinate synthetase, chain A, domain 2"/>
    <property type="match status" value="1"/>
</dbReference>
<dbReference type="Gene3D" id="3.40.50.620">
    <property type="entry name" value="HUPs"/>
    <property type="match status" value="1"/>
</dbReference>
<dbReference type="Gene3D" id="1.20.5.470">
    <property type="entry name" value="Single helix bin"/>
    <property type="match status" value="1"/>
</dbReference>
<dbReference type="HAMAP" id="MF_00005">
    <property type="entry name" value="Arg_succ_synth_type1"/>
    <property type="match status" value="1"/>
</dbReference>
<dbReference type="InterPro" id="IPR048268">
    <property type="entry name" value="Arginosuc_syn_C"/>
</dbReference>
<dbReference type="InterPro" id="IPR048267">
    <property type="entry name" value="Arginosuc_syn_N"/>
</dbReference>
<dbReference type="InterPro" id="IPR001518">
    <property type="entry name" value="Arginosuc_synth"/>
</dbReference>
<dbReference type="InterPro" id="IPR018223">
    <property type="entry name" value="Arginosuc_synth_CS"/>
</dbReference>
<dbReference type="InterPro" id="IPR023434">
    <property type="entry name" value="Arginosuc_synth_type_1_subfam"/>
</dbReference>
<dbReference type="InterPro" id="IPR024074">
    <property type="entry name" value="AS_cat/multimer_dom_body"/>
</dbReference>
<dbReference type="InterPro" id="IPR014729">
    <property type="entry name" value="Rossmann-like_a/b/a_fold"/>
</dbReference>
<dbReference type="NCBIfam" id="TIGR00032">
    <property type="entry name" value="argG"/>
    <property type="match status" value="1"/>
</dbReference>
<dbReference type="NCBIfam" id="NF001770">
    <property type="entry name" value="PRK00509.1"/>
    <property type="match status" value="1"/>
</dbReference>
<dbReference type="PANTHER" id="PTHR11587">
    <property type="entry name" value="ARGININOSUCCINATE SYNTHASE"/>
    <property type="match status" value="1"/>
</dbReference>
<dbReference type="PANTHER" id="PTHR11587:SF2">
    <property type="entry name" value="ARGININOSUCCINATE SYNTHASE"/>
    <property type="match status" value="1"/>
</dbReference>
<dbReference type="Pfam" id="PF20979">
    <property type="entry name" value="Arginosuc_syn_C"/>
    <property type="match status" value="1"/>
</dbReference>
<dbReference type="Pfam" id="PF00764">
    <property type="entry name" value="Arginosuc_synth"/>
    <property type="match status" value="1"/>
</dbReference>
<dbReference type="SUPFAM" id="SSF52402">
    <property type="entry name" value="Adenine nucleotide alpha hydrolases-like"/>
    <property type="match status" value="1"/>
</dbReference>
<dbReference type="SUPFAM" id="SSF69864">
    <property type="entry name" value="Argininosuccinate synthetase, C-terminal domain"/>
    <property type="match status" value="1"/>
</dbReference>
<dbReference type="PROSITE" id="PS00564">
    <property type="entry name" value="ARGININOSUCCIN_SYN_1"/>
    <property type="match status" value="1"/>
</dbReference>
<dbReference type="PROSITE" id="PS00565">
    <property type="entry name" value="ARGININOSUCCIN_SYN_2"/>
    <property type="match status" value="1"/>
</dbReference>
<keyword id="KW-0028">Amino-acid biosynthesis</keyword>
<keyword id="KW-0055">Arginine biosynthesis</keyword>
<keyword id="KW-0067">ATP-binding</keyword>
<keyword id="KW-0963">Cytoplasm</keyword>
<keyword id="KW-0436">Ligase</keyword>
<keyword id="KW-0547">Nucleotide-binding</keyword>
<keyword id="KW-1185">Reference proteome</keyword>
<organism>
    <name type="scientific">Nocardia farcinica (strain IFM 10152)</name>
    <dbReference type="NCBI Taxonomy" id="247156"/>
    <lineage>
        <taxon>Bacteria</taxon>
        <taxon>Bacillati</taxon>
        <taxon>Actinomycetota</taxon>
        <taxon>Actinomycetes</taxon>
        <taxon>Mycobacteriales</taxon>
        <taxon>Nocardiaceae</taxon>
        <taxon>Nocardia</taxon>
    </lineage>
</organism>
<proteinExistence type="inferred from homology"/>
<evidence type="ECO:0000255" key="1">
    <source>
        <dbReference type="HAMAP-Rule" id="MF_00005"/>
    </source>
</evidence>
<protein>
    <recommendedName>
        <fullName evidence="1">Argininosuccinate synthase</fullName>
        <ecNumber evidence="1">6.3.4.5</ecNumber>
    </recommendedName>
    <alternativeName>
        <fullName evidence="1">Citrulline--aspartate ligase</fullName>
    </alternativeName>
</protein>
<name>ASSY_NOCFA</name>
<feature type="chain" id="PRO_0000148619" description="Argininosuccinate synthase">
    <location>
        <begin position="1"/>
        <end position="400"/>
    </location>
</feature>
<feature type="binding site" evidence="1">
    <location>
        <begin position="8"/>
        <end position="16"/>
    </location>
    <ligand>
        <name>ATP</name>
        <dbReference type="ChEBI" id="CHEBI:30616"/>
    </ligand>
</feature>
<feature type="binding site" evidence="1">
    <location>
        <position position="87"/>
    </location>
    <ligand>
        <name>L-citrulline</name>
        <dbReference type="ChEBI" id="CHEBI:57743"/>
    </ligand>
</feature>
<feature type="binding site" evidence="1">
    <location>
        <position position="117"/>
    </location>
    <ligand>
        <name>ATP</name>
        <dbReference type="ChEBI" id="CHEBI:30616"/>
    </ligand>
</feature>
<feature type="binding site" evidence="1">
    <location>
        <position position="119"/>
    </location>
    <ligand>
        <name>L-aspartate</name>
        <dbReference type="ChEBI" id="CHEBI:29991"/>
    </ligand>
</feature>
<feature type="binding site" evidence="1">
    <location>
        <position position="123"/>
    </location>
    <ligand>
        <name>L-aspartate</name>
        <dbReference type="ChEBI" id="CHEBI:29991"/>
    </ligand>
</feature>
<feature type="binding site" evidence="1">
    <location>
        <position position="123"/>
    </location>
    <ligand>
        <name>L-citrulline</name>
        <dbReference type="ChEBI" id="CHEBI:57743"/>
    </ligand>
</feature>
<feature type="binding site" evidence="1">
    <location>
        <position position="124"/>
    </location>
    <ligand>
        <name>L-aspartate</name>
        <dbReference type="ChEBI" id="CHEBI:29991"/>
    </ligand>
</feature>
<feature type="binding site" evidence="1">
    <location>
        <position position="127"/>
    </location>
    <ligand>
        <name>L-citrulline</name>
        <dbReference type="ChEBI" id="CHEBI:57743"/>
    </ligand>
</feature>
<feature type="binding site" evidence="1">
    <location>
        <position position="175"/>
    </location>
    <ligand>
        <name>L-citrulline</name>
        <dbReference type="ChEBI" id="CHEBI:57743"/>
    </ligand>
</feature>
<feature type="binding site" evidence="1">
    <location>
        <position position="260"/>
    </location>
    <ligand>
        <name>L-citrulline</name>
        <dbReference type="ChEBI" id="CHEBI:57743"/>
    </ligand>
</feature>
<feature type="binding site" evidence="1">
    <location>
        <position position="272"/>
    </location>
    <ligand>
        <name>L-citrulline</name>
        <dbReference type="ChEBI" id="CHEBI:57743"/>
    </ligand>
</feature>